<protein>
    <recommendedName>
        <fullName>Mitochondrial Rho GTPase 1</fullName>
        <ecNumber>3.6.5.-</ecNumber>
    </recommendedName>
    <alternativeName>
        <fullName>GTPase EF-hand protein of mitochondria 1</fullName>
    </alternativeName>
</protein>
<proteinExistence type="inferred from homology"/>
<reference key="1">
    <citation type="journal article" date="2003" name="Nucleic Acids Res.">
        <title>What's in the genome of a filamentous fungus? Analysis of the Neurospora genome sequence.</title>
        <authorList>
            <person name="Mannhaupt G."/>
            <person name="Montrone C."/>
            <person name="Haase D."/>
            <person name="Mewes H.-W."/>
            <person name="Aign V."/>
            <person name="Hoheisel J.D."/>
            <person name="Fartmann B."/>
            <person name="Nyakatura G."/>
            <person name="Kempken F."/>
            <person name="Maier J."/>
            <person name="Schulte U."/>
        </authorList>
    </citation>
    <scope>NUCLEOTIDE SEQUENCE [LARGE SCALE GENOMIC DNA]</scope>
    <source>
        <strain>ATCC 24698 / 74-OR23-1A / CBS 708.71 / DSM 1257 / FGSC 987</strain>
    </source>
</reference>
<reference key="2">
    <citation type="journal article" date="2003" name="Nature">
        <title>The genome sequence of the filamentous fungus Neurospora crassa.</title>
        <authorList>
            <person name="Galagan J.E."/>
            <person name="Calvo S.E."/>
            <person name="Borkovich K.A."/>
            <person name="Selker E.U."/>
            <person name="Read N.D."/>
            <person name="Jaffe D.B."/>
            <person name="FitzHugh W."/>
            <person name="Ma L.-J."/>
            <person name="Smirnov S."/>
            <person name="Purcell S."/>
            <person name="Rehman B."/>
            <person name="Elkins T."/>
            <person name="Engels R."/>
            <person name="Wang S."/>
            <person name="Nielsen C.B."/>
            <person name="Butler J."/>
            <person name="Endrizzi M."/>
            <person name="Qui D."/>
            <person name="Ianakiev P."/>
            <person name="Bell-Pedersen D."/>
            <person name="Nelson M.A."/>
            <person name="Werner-Washburne M."/>
            <person name="Selitrennikoff C.P."/>
            <person name="Kinsey J.A."/>
            <person name="Braun E.L."/>
            <person name="Zelter A."/>
            <person name="Schulte U."/>
            <person name="Kothe G.O."/>
            <person name="Jedd G."/>
            <person name="Mewes H.-W."/>
            <person name="Staben C."/>
            <person name="Marcotte E."/>
            <person name="Greenberg D."/>
            <person name="Roy A."/>
            <person name="Foley K."/>
            <person name="Naylor J."/>
            <person name="Stange-Thomann N."/>
            <person name="Barrett R."/>
            <person name="Gnerre S."/>
            <person name="Kamal M."/>
            <person name="Kamvysselis M."/>
            <person name="Mauceli E.W."/>
            <person name="Bielke C."/>
            <person name="Rudd S."/>
            <person name="Frishman D."/>
            <person name="Krystofova S."/>
            <person name="Rasmussen C."/>
            <person name="Metzenberg R.L."/>
            <person name="Perkins D.D."/>
            <person name="Kroken S."/>
            <person name="Cogoni C."/>
            <person name="Macino G."/>
            <person name="Catcheside D.E.A."/>
            <person name="Li W."/>
            <person name="Pratt R.J."/>
            <person name="Osmani S.A."/>
            <person name="DeSouza C.P.C."/>
            <person name="Glass N.L."/>
            <person name="Orbach M.J."/>
            <person name="Berglund J.A."/>
            <person name="Voelker R."/>
            <person name="Yarden O."/>
            <person name="Plamann M."/>
            <person name="Seiler S."/>
            <person name="Dunlap J.C."/>
            <person name="Radford A."/>
            <person name="Aramayo R."/>
            <person name="Natvig D.O."/>
            <person name="Alex L.A."/>
            <person name="Mannhaupt G."/>
            <person name="Ebbole D.J."/>
            <person name="Freitag M."/>
            <person name="Paulsen I."/>
            <person name="Sachs M.S."/>
            <person name="Lander E.S."/>
            <person name="Nusbaum C."/>
            <person name="Birren B.W."/>
        </authorList>
    </citation>
    <scope>NUCLEOTIDE SEQUENCE [LARGE SCALE GENOMIC DNA]</scope>
    <source>
        <strain>ATCC 24698 / 74-OR23-1A / CBS 708.71 / DSM 1257 / FGSC 987</strain>
    </source>
</reference>
<organism>
    <name type="scientific">Neurospora crassa (strain ATCC 24698 / 74-OR23-1A / CBS 708.71 / DSM 1257 / FGSC 987)</name>
    <dbReference type="NCBI Taxonomy" id="367110"/>
    <lineage>
        <taxon>Eukaryota</taxon>
        <taxon>Fungi</taxon>
        <taxon>Dikarya</taxon>
        <taxon>Ascomycota</taxon>
        <taxon>Pezizomycotina</taxon>
        <taxon>Sordariomycetes</taxon>
        <taxon>Sordariomycetidae</taxon>
        <taxon>Sordariales</taxon>
        <taxon>Sordariaceae</taxon>
        <taxon>Neurospora</taxon>
    </lineage>
</organism>
<sequence length="629" mass="70247">MSTAVRICVCGDEGTGKSSLIASLVKGVFVANKIQAVLPQVTIPPTTGTPENVTTTIVDTSARPQDRTTLRKEIRKSNVILLVYSDHYSYERVALFWMPYFRSLGVNVPVVLCANKSDLVSDGNAAQVAEEEMLPVMAEFREIDSCIRTSAKEQKNVIEVFYLCQKAVTHPIAPLFDYKEGQLKPACVDALRRIFFLSDKDQDGYLNDQEMQDFQQKSFDKPLSQEDLDNIKLTVSKSVPSSSTDKGLDLRGFLQLNKLYAEKGRHETIWIILRKYHYTDSLSLEDSFLHPRFDVPDYASAELSPAGYRFFMDLFLTFDKDNDGGLNDRELAALFAPTPGLPHSWAETSFPSTTVRNEAGHITLQGWLAQWSMTTFLEPKTTLEYLAYLGFETPNARETTTAALKITKPRKRRRRPGRVDRNVVLCYILGSSGAGKSSLLDVFLNRPFDTLYHPTIKPRQAVNSVELQGGKQCYLILEELGELEPAILENQAKLDACDLICYAYDSSEPDSFSHIVELRKRYPQLDELPAVYTALKADRDKTTQRSELQPDAYTAALNMSAPLHVSVTWNSISELFVALAEAATNPSTAFPRSEEPPADRASLYMALGATACAALAAFMIWRRSTSNAA</sequence>
<keyword id="KW-0106">Calcium</keyword>
<keyword id="KW-0342">GTP-binding</keyword>
<keyword id="KW-0378">Hydrolase</keyword>
<keyword id="KW-0472">Membrane</keyword>
<keyword id="KW-0479">Metal-binding</keyword>
<keyword id="KW-0496">Mitochondrion</keyword>
<keyword id="KW-1000">Mitochondrion outer membrane</keyword>
<keyword id="KW-0547">Nucleotide-binding</keyword>
<keyword id="KW-1185">Reference proteome</keyword>
<keyword id="KW-0677">Repeat</keyword>
<keyword id="KW-0812">Transmembrane</keyword>
<keyword id="KW-1133">Transmembrane helix</keyword>
<accession>Q7RZA2</accession>
<gene>
    <name type="primary">gem-1</name>
    <name type="ORF">G17A4.060</name>
    <name type="ORF">NCU03966</name>
</gene>
<dbReference type="EC" id="3.6.5.-"/>
<dbReference type="EMBL" id="BX908812">
    <property type="protein sequence ID" value="CAF06141.1"/>
    <property type="molecule type" value="Genomic_DNA"/>
</dbReference>
<dbReference type="EMBL" id="CM002241">
    <property type="protein sequence ID" value="EAA28369.1"/>
    <property type="molecule type" value="Genomic_DNA"/>
</dbReference>
<dbReference type="RefSeq" id="XP_957605.1">
    <property type="nucleotide sequence ID" value="XM_952512.2"/>
</dbReference>
<dbReference type="SMR" id="Q7RZA2"/>
<dbReference type="FunCoup" id="Q7RZA2">
    <property type="interactions" value="796"/>
</dbReference>
<dbReference type="STRING" id="367110.Q7RZA2"/>
<dbReference type="PaxDb" id="5141-EFNCRP00000003564"/>
<dbReference type="EnsemblFungi" id="EAA28369">
    <property type="protein sequence ID" value="EAA28369"/>
    <property type="gene ID" value="NCU03966"/>
</dbReference>
<dbReference type="GeneID" id="3873727"/>
<dbReference type="KEGG" id="ncr:NCU03966"/>
<dbReference type="VEuPathDB" id="FungiDB:NCU03966"/>
<dbReference type="HOGENOM" id="CLU_014255_3_0_1"/>
<dbReference type="InParanoid" id="Q7RZA2"/>
<dbReference type="OMA" id="HETTWGI"/>
<dbReference type="OrthoDB" id="10020961at2759"/>
<dbReference type="Proteomes" id="UP000001805">
    <property type="component" value="Chromosome 5, Linkage Group VI"/>
</dbReference>
<dbReference type="GO" id="GO:0032865">
    <property type="term" value="C:ERMES complex"/>
    <property type="evidence" value="ECO:0007669"/>
    <property type="project" value="EnsemblFungi"/>
</dbReference>
<dbReference type="GO" id="GO:0005741">
    <property type="term" value="C:mitochondrial outer membrane"/>
    <property type="evidence" value="ECO:0000318"/>
    <property type="project" value="GO_Central"/>
</dbReference>
<dbReference type="GO" id="GO:0005509">
    <property type="term" value="F:calcium ion binding"/>
    <property type="evidence" value="ECO:0007669"/>
    <property type="project" value="EnsemblFungi"/>
</dbReference>
<dbReference type="GO" id="GO:0005525">
    <property type="term" value="F:GTP binding"/>
    <property type="evidence" value="ECO:0000318"/>
    <property type="project" value="GO_Central"/>
</dbReference>
<dbReference type="GO" id="GO:0003924">
    <property type="term" value="F:GTPase activity"/>
    <property type="evidence" value="ECO:0000318"/>
    <property type="project" value="GO_Central"/>
</dbReference>
<dbReference type="GO" id="GO:0015886">
    <property type="term" value="P:heme transport"/>
    <property type="evidence" value="ECO:0007669"/>
    <property type="project" value="EnsemblFungi"/>
</dbReference>
<dbReference type="GO" id="GO:0000001">
    <property type="term" value="P:mitochondrion inheritance"/>
    <property type="evidence" value="ECO:0007669"/>
    <property type="project" value="EnsemblFungi"/>
</dbReference>
<dbReference type="GO" id="GO:0007005">
    <property type="term" value="P:mitochondrion organization"/>
    <property type="evidence" value="ECO:0000318"/>
    <property type="project" value="GO_Central"/>
</dbReference>
<dbReference type="GO" id="GO:1990456">
    <property type="term" value="P:mitochondrion-endoplasmic reticulum membrane tethering"/>
    <property type="evidence" value="ECO:0007669"/>
    <property type="project" value="EnsemblFungi"/>
</dbReference>
<dbReference type="GO" id="GO:0055091">
    <property type="term" value="P:phospholipid homeostasis"/>
    <property type="evidence" value="ECO:0007669"/>
    <property type="project" value="EnsemblFungi"/>
</dbReference>
<dbReference type="GO" id="GO:0010821">
    <property type="term" value="P:regulation of mitochondrion organization"/>
    <property type="evidence" value="ECO:0007669"/>
    <property type="project" value="EnsemblFungi"/>
</dbReference>
<dbReference type="CDD" id="cd01893">
    <property type="entry name" value="Miro1"/>
    <property type="match status" value="1"/>
</dbReference>
<dbReference type="CDD" id="cd01892">
    <property type="entry name" value="Miro2"/>
    <property type="match status" value="1"/>
</dbReference>
<dbReference type="FunFam" id="1.10.238.10:FF:000127">
    <property type="entry name" value="Mitochondrial Rho GTPase"/>
    <property type="match status" value="1"/>
</dbReference>
<dbReference type="FunFam" id="1.10.238.10:FF:000185">
    <property type="entry name" value="Mitochondrial Rho GTPase"/>
    <property type="match status" value="1"/>
</dbReference>
<dbReference type="FunFam" id="3.40.50.300:FF:000572">
    <property type="entry name" value="Mitochondrial Rho GTPase"/>
    <property type="match status" value="1"/>
</dbReference>
<dbReference type="FunFam" id="3.40.50.300:FF:000878">
    <property type="entry name" value="Mitochondrial Rho GTPase"/>
    <property type="match status" value="1"/>
</dbReference>
<dbReference type="Gene3D" id="1.10.238.10">
    <property type="entry name" value="EF-hand"/>
    <property type="match status" value="2"/>
</dbReference>
<dbReference type="Gene3D" id="3.40.50.300">
    <property type="entry name" value="P-loop containing nucleotide triphosphate hydrolases"/>
    <property type="match status" value="2"/>
</dbReference>
<dbReference type="InterPro" id="IPR011992">
    <property type="entry name" value="EF-hand-dom_pair"/>
</dbReference>
<dbReference type="InterPro" id="IPR018247">
    <property type="entry name" value="EF_Hand_1_Ca_BS"/>
</dbReference>
<dbReference type="InterPro" id="IPR013566">
    <property type="entry name" value="EF_hand_assoc_1"/>
</dbReference>
<dbReference type="InterPro" id="IPR013567">
    <property type="entry name" value="EF_hand_assoc_2"/>
</dbReference>
<dbReference type="InterPro" id="IPR002048">
    <property type="entry name" value="EF_hand_dom"/>
</dbReference>
<dbReference type="InterPro" id="IPR021181">
    <property type="entry name" value="Miro"/>
</dbReference>
<dbReference type="InterPro" id="IPR052266">
    <property type="entry name" value="Miro-EF-hand_domain"/>
</dbReference>
<dbReference type="InterPro" id="IPR020860">
    <property type="entry name" value="MIRO_dom"/>
</dbReference>
<dbReference type="InterPro" id="IPR027417">
    <property type="entry name" value="P-loop_NTPase"/>
</dbReference>
<dbReference type="InterPro" id="IPR001806">
    <property type="entry name" value="Small_GTPase"/>
</dbReference>
<dbReference type="PANTHER" id="PTHR46819">
    <property type="entry name" value="EF-HAND CALCIUM-BINDING DOMAIN-CONTAINING PROTEIN 7"/>
    <property type="match status" value="1"/>
</dbReference>
<dbReference type="PANTHER" id="PTHR46819:SF1">
    <property type="entry name" value="EF-HAND CALCIUM-BINDING DOMAIN-CONTAINING PROTEIN 7"/>
    <property type="match status" value="1"/>
</dbReference>
<dbReference type="Pfam" id="PF08355">
    <property type="entry name" value="EF_assoc_1"/>
    <property type="match status" value="1"/>
</dbReference>
<dbReference type="Pfam" id="PF08356">
    <property type="entry name" value="EF_assoc_2"/>
    <property type="match status" value="1"/>
</dbReference>
<dbReference type="Pfam" id="PF00071">
    <property type="entry name" value="Ras"/>
    <property type="match status" value="2"/>
</dbReference>
<dbReference type="PIRSF" id="PIRSF037488">
    <property type="entry name" value="Mt_Rho_GTPase"/>
    <property type="match status" value="1"/>
</dbReference>
<dbReference type="PRINTS" id="PR00449">
    <property type="entry name" value="RASTRNSFRMNG"/>
</dbReference>
<dbReference type="SMART" id="SM00054">
    <property type="entry name" value="EFh"/>
    <property type="match status" value="2"/>
</dbReference>
<dbReference type="SMART" id="SM00175">
    <property type="entry name" value="RAB"/>
    <property type="match status" value="1"/>
</dbReference>
<dbReference type="SMART" id="SM00173">
    <property type="entry name" value="RAS"/>
    <property type="match status" value="1"/>
</dbReference>
<dbReference type="SMART" id="SM00174">
    <property type="entry name" value="RHO"/>
    <property type="match status" value="1"/>
</dbReference>
<dbReference type="SUPFAM" id="SSF47473">
    <property type="entry name" value="EF-hand"/>
    <property type="match status" value="1"/>
</dbReference>
<dbReference type="SUPFAM" id="SSF52540">
    <property type="entry name" value="P-loop containing nucleoside triphosphate hydrolases"/>
    <property type="match status" value="2"/>
</dbReference>
<dbReference type="PROSITE" id="PS00018">
    <property type="entry name" value="EF_HAND_1"/>
    <property type="match status" value="1"/>
</dbReference>
<dbReference type="PROSITE" id="PS50222">
    <property type="entry name" value="EF_HAND_2"/>
    <property type="match status" value="2"/>
</dbReference>
<dbReference type="PROSITE" id="PS51423">
    <property type="entry name" value="MIRO"/>
    <property type="match status" value="2"/>
</dbReference>
<evidence type="ECO:0000250" key="1">
    <source>
        <dbReference type="UniProtKB" id="P39722"/>
    </source>
</evidence>
<evidence type="ECO:0000255" key="2"/>
<evidence type="ECO:0000255" key="3">
    <source>
        <dbReference type="PROSITE-ProRule" id="PRU00448"/>
    </source>
</evidence>
<evidence type="ECO:0000255" key="4">
    <source>
        <dbReference type="PROSITE-ProRule" id="PRU00757"/>
    </source>
</evidence>
<evidence type="ECO:0000305" key="5"/>
<feature type="chain" id="PRO_0000239338" description="Mitochondrial Rho GTPase 1">
    <location>
        <begin position="1"/>
        <end position="629"/>
    </location>
</feature>
<feature type="topological domain" description="Cytoplasmic" evidence="2">
    <location>
        <begin position="1"/>
        <end position="600"/>
    </location>
</feature>
<feature type="transmembrane region" description="Helical; Anchor for type IV membrane protein" evidence="2">
    <location>
        <begin position="601"/>
        <end position="621"/>
    </location>
</feature>
<feature type="topological domain" description="Mitochondrial intermembrane" evidence="2">
    <location>
        <begin position="622"/>
        <end position="629"/>
    </location>
</feature>
<feature type="domain" description="Miro 1" evidence="4">
    <location>
        <begin position="2"/>
        <end position="170"/>
    </location>
</feature>
<feature type="domain" description="EF-hand 1" evidence="3">
    <location>
        <begin position="186"/>
        <end position="221"/>
    </location>
</feature>
<feature type="domain" description="EF-hand 2" evidence="3">
    <location>
        <begin position="306"/>
        <end position="341"/>
    </location>
</feature>
<feature type="domain" description="Miro 2" evidence="4">
    <location>
        <begin position="421"/>
        <end position="585"/>
    </location>
</feature>
<feature type="binding site" evidence="2">
    <location>
        <begin position="11"/>
        <end position="18"/>
    </location>
    <ligand>
        <name>GTP</name>
        <dbReference type="ChEBI" id="CHEBI:37565"/>
        <label>1</label>
    </ligand>
</feature>
<feature type="binding site" evidence="2">
    <location>
        <begin position="59"/>
        <end position="63"/>
    </location>
    <ligand>
        <name>GTP</name>
        <dbReference type="ChEBI" id="CHEBI:37565"/>
        <label>1</label>
    </ligand>
</feature>
<feature type="binding site" evidence="2">
    <location>
        <begin position="115"/>
        <end position="118"/>
    </location>
    <ligand>
        <name>GTP</name>
        <dbReference type="ChEBI" id="CHEBI:37565"/>
        <label>1</label>
    </ligand>
</feature>
<feature type="binding site" evidence="3">
    <location>
        <position position="199"/>
    </location>
    <ligand>
        <name>Ca(2+)</name>
        <dbReference type="ChEBI" id="CHEBI:29108"/>
        <label>1</label>
    </ligand>
</feature>
<feature type="binding site" evidence="3">
    <location>
        <position position="201"/>
    </location>
    <ligand>
        <name>Ca(2+)</name>
        <dbReference type="ChEBI" id="CHEBI:29108"/>
        <label>1</label>
    </ligand>
</feature>
<feature type="binding site" evidence="3">
    <location>
        <position position="203"/>
    </location>
    <ligand>
        <name>Ca(2+)</name>
        <dbReference type="ChEBI" id="CHEBI:29108"/>
        <label>1</label>
    </ligand>
</feature>
<feature type="binding site" evidence="3">
    <location>
        <position position="205"/>
    </location>
    <ligand>
        <name>Ca(2+)</name>
        <dbReference type="ChEBI" id="CHEBI:29108"/>
        <label>1</label>
    </ligand>
</feature>
<feature type="binding site" evidence="3">
    <location>
        <position position="210"/>
    </location>
    <ligand>
        <name>Ca(2+)</name>
        <dbReference type="ChEBI" id="CHEBI:29108"/>
        <label>1</label>
    </ligand>
</feature>
<feature type="binding site" evidence="5">
    <location>
        <position position="319"/>
    </location>
    <ligand>
        <name>Ca(2+)</name>
        <dbReference type="ChEBI" id="CHEBI:29108"/>
        <label>2</label>
    </ligand>
</feature>
<feature type="binding site" evidence="5">
    <location>
        <position position="321"/>
    </location>
    <ligand>
        <name>Ca(2+)</name>
        <dbReference type="ChEBI" id="CHEBI:29108"/>
        <label>2</label>
    </ligand>
</feature>
<feature type="binding site" evidence="5">
    <location>
        <position position="323"/>
    </location>
    <ligand>
        <name>Ca(2+)</name>
        <dbReference type="ChEBI" id="CHEBI:29108"/>
        <label>2</label>
    </ligand>
</feature>
<feature type="binding site" evidence="5">
    <location>
        <position position="330"/>
    </location>
    <ligand>
        <name>Ca(2+)</name>
        <dbReference type="ChEBI" id="CHEBI:29108"/>
        <label>2</label>
    </ligand>
</feature>
<feature type="binding site" evidence="2">
    <location>
        <begin position="430"/>
        <end position="437"/>
    </location>
    <ligand>
        <name>GTP</name>
        <dbReference type="ChEBI" id="CHEBI:37565"/>
        <label>2</label>
    </ligand>
</feature>
<feature type="binding site" evidence="2">
    <location>
        <begin position="466"/>
        <end position="470"/>
    </location>
    <ligand>
        <name>GTP</name>
        <dbReference type="ChEBI" id="CHEBI:37565"/>
        <label>2</label>
    </ligand>
</feature>
<feature type="binding site" evidence="2">
    <location>
        <begin position="535"/>
        <end position="538"/>
    </location>
    <ligand>
        <name>GTP</name>
        <dbReference type="ChEBI" id="CHEBI:37565"/>
        <label>2</label>
    </ligand>
</feature>
<comment type="function">
    <text evidence="1">Mitochondrial GTPase involved in mitochondrial trafficking. Probably involved in control of anterograde transport of mitochondria and their subcellular distribution.</text>
</comment>
<comment type="subcellular location">
    <subcellularLocation>
        <location evidence="1">Mitochondrion outer membrane</location>
        <topology evidence="1">Single-pass type IV membrane protein</topology>
    </subcellularLocation>
</comment>
<comment type="similarity">
    <text evidence="4 5">Belongs to the mitochondrial Rho GTPase family.</text>
</comment>
<name>GEM1_NEUCR</name>